<organism>
    <name type="scientific">Oceanobacillus iheyensis (strain DSM 14371 / CIP 107618 / JCM 11309 / KCTC 3954 / HTE831)</name>
    <dbReference type="NCBI Taxonomy" id="221109"/>
    <lineage>
        <taxon>Bacteria</taxon>
        <taxon>Bacillati</taxon>
        <taxon>Bacillota</taxon>
        <taxon>Bacilli</taxon>
        <taxon>Bacillales</taxon>
        <taxon>Bacillaceae</taxon>
        <taxon>Oceanobacillus</taxon>
    </lineage>
</organism>
<protein>
    <recommendedName>
        <fullName evidence="1">DNA polymerase IV</fullName>
        <shortName evidence="1">Pol IV</shortName>
        <ecNumber evidence="1">2.7.7.7</ecNumber>
    </recommendedName>
</protein>
<accession>Q8EQ56</accession>
<gene>
    <name evidence="1" type="primary">dinB</name>
    <name type="ordered locus">OB1858</name>
</gene>
<feature type="chain" id="PRO_0000173930" description="DNA polymerase IV">
    <location>
        <begin position="1"/>
        <end position="419"/>
    </location>
</feature>
<feature type="domain" description="UmuC" evidence="1">
    <location>
        <begin position="12"/>
        <end position="193"/>
    </location>
</feature>
<feature type="region of interest" description="Disordered" evidence="2">
    <location>
        <begin position="388"/>
        <end position="419"/>
    </location>
</feature>
<feature type="active site" evidence="1">
    <location>
        <position position="113"/>
    </location>
</feature>
<feature type="binding site" evidence="1">
    <location>
        <position position="16"/>
    </location>
    <ligand>
        <name>Mg(2+)</name>
        <dbReference type="ChEBI" id="CHEBI:18420"/>
    </ligand>
</feature>
<feature type="binding site" evidence="1">
    <location>
        <position position="112"/>
    </location>
    <ligand>
        <name>Mg(2+)</name>
        <dbReference type="ChEBI" id="CHEBI:18420"/>
    </ligand>
</feature>
<feature type="site" description="Substrate discrimination" evidence="1">
    <location>
        <position position="21"/>
    </location>
</feature>
<proteinExistence type="inferred from homology"/>
<keyword id="KW-0963">Cytoplasm</keyword>
<keyword id="KW-0227">DNA damage</keyword>
<keyword id="KW-0234">DNA repair</keyword>
<keyword id="KW-0235">DNA replication</keyword>
<keyword id="KW-0238">DNA-binding</keyword>
<keyword id="KW-0239">DNA-directed DNA polymerase</keyword>
<keyword id="KW-0460">Magnesium</keyword>
<keyword id="KW-0479">Metal-binding</keyword>
<keyword id="KW-0515">Mutator protein</keyword>
<keyword id="KW-0548">Nucleotidyltransferase</keyword>
<keyword id="KW-1185">Reference proteome</keyword>
<keyword id="KW-0808">Transferase</keyword>
<comment type="function">
    <text evidence="1">Poorly processive, error-prone DNA polymerase involved in untargeted mutagenesis. Copies undamaged DNA at stalled replication forks, which arise in vivo from mismatched or misaligned primer ends. These misaligned primers can be extended by PolIV. Exhibits no 3'-5' exonuclease (proofreading) activity. May be involved in translesional synthesis, in conjunction with the beta clamp from PolIII.</text>
</comment>
<comment type="catalytic activity">
    <reaction evidence="1">
        <text>DNA(n) + a 2'-deoxyribonucleoside 5'-triphosphate = DNA(n+1) + diphosphate</text>
        <dbReference type="Rhea" id="RHEA:22508"/>
        <dbReference type="Rhea" id="RHEA-COMP:17339"/>
        <dbReference type="Rhea" id="RHEA-COMP:17340"/>
        <dbReference type="ChEBI" id="CHEBI:33019"/>
        <dbReference type="ChEBI" id="CHEBI:61560"/>
        <dbReference type="ChEBI" id="CHEBI:173112"/>
        <dbReference type="EC" id="2.7.7.7"/>
    </reaction>
</comment>
<comment type="cofactor">
    <cofactor evidence="1">
        <name>Mg(2+)</name>
        <dbReference type="ChEBI" id="CHEBI:18420"/>
    </cofactor>
    <text evidence="1">Binds 2 magnesium ions per subunit.</text>
</comment>
<comment type="subunit">
    <text evidence="1">Monomer.</text>
</comment>
<comment type="subcellular location">
    <subcellularLocation>
        <location evidence="1">Cytoplasm</location>
    </subcellularLocation>
</comment>
<comment type="similarity">
    <text evidence="1">Belongs to the DNA polymerase type-Y family.</text>
</comment>
<name>DPO4_OCEIH</name>
<dbReference type="EC" id="2.7.7.7" evidence="1"/>
<dbReference type="EMBL" id="BA000028">
    <property type="protein sequence ID" value="BAC13814.1"/>
    <property type="molecule type" value="Genomic_DNA"/>
</dbReference>
<dbReference type="RefSeq" id="WP_011066254.1">
    <property type="nucleotide sequence ID" value="NC_004193.1"/>
</dbReference>
<dbReference type="SMR" id="Q8EQ56"/>
<dbReference type="STRING" id="221109.gene:10734098"/>
<dbReference type="KEGG" id="oih:OB1858"/>
<dbReference type="eggNOG" id="COG0389">
    <property type="taxonomic scope" value="Bacteria"/>
</dbReference>
<dbReference type="HOGENOM" id="CLU_012348_1_1_9"/>
<dbReference type="OrthoDB" id="9808813at2"/>
<dbReference type="PhylomeDB" id="Q8EQ56"/>
<dbReference type="Proteomes" id="UP000000822">
    <property type="component" value="Chromosome"/>
</dbReference>
<dbReference type="GO" id="GO:0005829">
    <property type="term" value="C:cytosol"/>
    <property type="evidence" value="ECO:0007669"/>
    <property type="project" value="TreeGrafter"/>
</dbReference>
<dbReference type="GO" id="GO:0003684">
    <property type="term" value="F:damaged DNA binding"/>
    <property type="evidence" value="ECO:0007669"/>
    <property type="project" value="InterPro"/>
</dbReference>
<dbReference type="GO" id="GO:0003887">
    <property type="term" value="F:DNA-directed DNA polymerase activity"/>
    <property type="evidence" value="ECO:0007669"/>
    <property type="project" value="UniProtKB-UniRule"/>
</dbReference>
<dbReference type="GO" id="GO:0000287">
    <property type="term" value="F:magnesium ion binding"/>
    <property type="evidence" value="ECO:0007669"/>
    <property type="project" value="UniProtKB-UniRule"/>
</dbReference>
<dbReference type="GO" id="GO:0006261">
    <property type="term" value="P:DNA-templated DNA replication"/>
    <property type="evidence" value="ECO:0007669"/>
    <property type="project" value="UniProtKB-UniRule"/>
</dbReference>
<dbReference type="GO" id="GO:0042276">
    <property type="term" value="P:error-prone translesion synthesis"/>
    <property type="evidence" value="ECO:0007669"/>
    <property type="project" value="TreeGrafter"/>
</dbReference>
<dbReference type="GO" id="GO:0009432">
    <property type="term" value="P:SOS response"/>
    <property type="evidence" value="ECO:0007669"/>
    <property type="project" value="TreeGrafter"/>
</dbReference>
<dbReference type="CDD" id="cd03586">
    <property type="entry name" value="PolY_Pol_IV_kappa"/>
    <property type="match status" value="1"/>
</dbReference>
<dbReference type="FunFam" id="3.40.1170.60:FF:000003">
    <property type="entry name" value="DNA polymerase eta"/>
    <property type="match status" value="1"/>
</dbReference>
<dbReference type="FunFam" id="3.30.1490.100:FF:000004">
    <property type="entry name" value="DNA polymerase IV"/>
    <property type="match status" value="1"/>
</dbReference>
<dbReference type="Gene3D" id="3.30.70.270">
    <property type="match status" value="1"/>
</dbReference>
<dbReference type="Gene3D" id="3.40.1170.60">
    <property type="match status" value="1"/>
</dbReference>
<dbReference type="Gene3D" id="1.10.150.20">
    <property type="entry name" value="5' to 3' exonuclease, C-terminal subdomain"/>
    <property type="match status" value="1"/>
</dbReference>
<dbReference type="Gene3D" id="3.30.1490.100">
    <property type="entry name" value="DNA polymerase, Y-family, little finger domain"/>
    <property type="match status" value="1"/>
</dbReference>
<dbReference type="HAMAP" id="MF_01113">
    <property type="entry name" value="DNApol_IV"/>
    <property type="match status" value="1"/>
</dbReference>
<dbReference type="InterPro" id="IPR043502">
    <property type="entry name" value="DNA/RNA_pol_sf"/>
</dbReference>
<dbReference type="InterPro" id="IPR036775">
    <property type="entry name" value="DNA_pol_Y-fam_lit_finger_sf"/>
</dbReference>
<dbReference type="InterPro" id="IPR017961">
    <property type="entry name" value="DNA_pol_Y-fam_little_finger"/>
</dbReference>
<dbReference type="InterPro" id="IPR050116">
    <property type="entry name" value="DNA_polymerase-Y"/>
</dbReference>
<dbReference type="InterPro" id="IPR022880">
    <property type="entry name" value="DNApol_IV"/>
</dbReference>
<dbReference type="InterPro" id="IPR024728">
    <property type="entry name" value="PolY_HhH_motif"/>
</dbReference>
<dbReference type="InterPro" id="IPR043128">
    <property type="entry name" value="Rev_trsase/Diguanyl_cyclase"/>
</dbReference>
<dbReference type="InterPro" id="IPR001126">
    <property type="entry name" value="UmuC"/>
</dbReference>
<dbReference type="NCBIfam" id="NF002492">
    <property type="entry name" value="PRK01810.1"/>
    <property type="match status" value="1"/>
</dbReference>
<dbReference type="NCBIfam" id="NF002677">
    <property type="entry name" value="PRK02406.1"/>
    <property type="match status" value="1"/>
</dbReference>
<dbReference type="PANTHER" id="PTHR11076:SF33">
    <property type="entry name" value="DNA POLYMERASE KAPPA"/>
    <property type="match status" value="1"/>
</dbReference>
<dbReference type="PANTHER" id="PTHR11076">
    <property type="entry name" value="DNA REPAIR POLYMERASE UMUC / TRANSFERASE FAMILY MEMBER"/>
    <property type="match status" value="1"/>
</dbReference>
<dbReference type="Pfam" id="PF00817">
    <property type="entry name" value="IMS"/>
    <property type="match status" value="1"/>
</dbReference>
<dbReference type="Pfam" id="PF11799">
    <property type="entry name" value="IMS_C"/>
    <property type="match status" value="1"/>
</dbReference>
<dbReference type="Pfam" id="PF11798">
    <property type="entry name" value="IMS_HHH"/>
    <property type="match status" value="1"/>
</dbReference>
<dbReference type="SUPFAM" id="SSF56672">
    <property type="entry name" value="DNA/RNA polymerases"/>
    <property type="match status" value="1"/>
</dbReference>
<dbReference type="SUPFAM" id="SSF100879">
    <property type="entry name" value="Lesion bypass DNA polymerase (Y-family), little finger domain"/>
    <property type="match status" value="1"/>
</dbReference>
<dbReference type="PROSITE" id="PS50173">
    <property type="entry name" value="UMUC"/>
    <property type="match status" value="1"/>
</dbReference>
<reference key="1">
    <citation type="journal article" date="2002" name="Nucleic Acids Res.">
        <title>Genome sequence of Oceanobacillus iheyensis isolated from the Iheya Ridge and its unexpected adaptive capabilities to extreme environments.</title>
        <authorList>
            <person name="Takami H."/>
            <person name="Takaki Y."/>
            <person name="Uchiyama I."/>
        </authorList>
    </citation>
    <scope>NUCLEOTIDE SEQUENCE [LARGE SCALE GENOMIC DNA]</scope>
    <source>
        <strain>DSM 14371 / CIP 107618 / JCM 11309 / KCTC 3954 / HTE831</strain>
    </source>
</reference>
<evidence type="ECO:0000255" key="1">
    <source>
        <dbReference type="HAMAP-Rule" id="MF_01113"/>
    </source>
</evidence>
<evidence type="ECO:0000256" key="2">
    <source>
        <dbReference type="SAM" id="MobiDB-lite"/>
    </source>
</evidence>
<sequence length="419" mass="48075">MQPSKVNKHRIIFHIDMNCFYASVEMAHNPSLKGKPLAIAGNPEERKGIIVTSSYEARGKGVKTTMPIWQAKKLCPDLILMRPNFDRYRAASREIFKMLAEITPYVQPVSIDEGYMDITDTIYAKDPLVTANQLQQRILSGLDIPCSIGIAPNKFLAKMASDMKKPLGITVLRKREVEKLLWPMSVEEMYGIGEKTAQKLNSIEIKTIGDLAKKNVYELKQLLGVNGERLQNRANGIDNRLVDPEAVHDFKSIGSSQTLPHDSTDVTELMQLIHELVDNVERRVKRKEAAGKTVQITIRYHDRKTITRSKKLYNYIDNHREILFVAKELFEQHWNEAPVRLLGVSLQDMETKRNIGEQLDLFTYEAIEKKEKLKVTVDKLTKKYGSNIITSQKNKNESQENQQPRTSFQKDFLDDYKKP</sequence>